<feature type="chain" id="PRO_0000145995" description="Phosphoglycerate kinase">
    <location>
        <begin position="1"/>
        <end position="398"/>
    </location>
</feature>
<feature type="binding site" evidence="1">
    <location>
        <begin position="23"/>
        <end position="25"/>
    </location>
    <ligand>
        <name>substrate</name>
    </ligand>
</feature>
<feature type="binding site" evidence="1">
    <location>
        <position position="38"/>
    </location>
    <ligand>
        <name>substrate</name>
    </ligand>
</feature>
<feature type="binding site" evidence="1">
    <location>
        <begin position="61"/>
        <end position="64"/>
    </location>
    <ligand>
        <name>substrate</name>
    </ligand>
</feature>
<feature type="binding site" evidence="1">
    <location>
        <position position="119"/>
    </location>
    <ligand>
        <name>substrate</name>
    </ligand>
</feature>
<feature type="binding site" evidence="1">
    <location>
        <position position="152"/>
    </location>
    <ligand>
        <name>substrate</name>
    </ligand>
</feature>
<feature type="binding site" evidence="1">
    <location>
        <position position="202"/>
    </location>
    <ligand>
        <name>ATP</name>
        <dbReference type="ChEBI" id="CHEBI:30616"/>
    </ligand>
</feature>
<feature type="binding site" evidence="1">
    <location>
        <position position="324"/>
    </location>
    <ligand>
        <name>ATP</name>
        <dbReference type="ChEBI" id="CHEBI:30616"/>
    </ligand>
</feature>
<feature type="binding site" evidence="1">
    <location>
        <begin position="354"/>
        <end position="357"/>
    </location>
    <ligand>
        <name>ATP</name>
        <dbReference type="ChEBI" id="CHEBI:30616"/>
    </ligand>
</feature>
<reference key="1">
    <citation type="journal article" date="2004" name="Nat. Biotechnol.">
        <title>Complete genome sequence of the metabolically versatile photosynthetic bacterium Rhodopseudomonas palustris.</title>
        <authorList>
            <person name="Larimer F.W."/>
            <person name="Chain P."/>
            <person name="Hauser L."/>
            <person name="Lamerdin J.E."/>
            <person name="Malfatti S."/>
            <person name="Do L."/>
            <person name="Land M.L."/>
            <person name="Pelletier D.A."/>
            <person name="Beatty J.T."/>
            <person name="Lang A.S."/>
            <person name="Tabita F.R."/>
            <person name="Gibson J.L."/>
            <person name="Hanson T.E."/>
            <person name="Bobst C."/>
            <person name="Torres y Torres J.L."/>
            <person name="Peres C."/>
            <person name="Harrison F.H."/>
            <person name="Gibson J."/>
            <person name="Harwood C.S."/>
        </authorList>
    </citation>
    <scope>NUCLEOTIDE SEQUENCE [LARGE SCALE GENOMIC DNA]</scope>
    <source>
        <strain>ATCC BAA-98 / CGA009</strain>
    </source>
</reference>
<accession>P62419</accession>
<dbReference type="EC" id="2.7.2.3" evidence="1"/>
<dbReference type="EMBL" id="BX572595">
    <property type="protein sequence ID" value="CAE26387.1"/>
    <property type="molecule type" value="Genomic_DNA"/>
</dbReference>
<dbReference type="RefSeq" id="WP_011156478.1">
    <property type="nucleotide sequence ID" value="NZ_CP116810.1"/>
</dbReference>
<dbReference type="SMR" id="P62419"/>
<dbReference type="STRING" id="258594.RPA0943"/>
<dbReference type="GeneID" id="66891962"/>
<dbReference type="eggNOG" id="COG0126">
    <property type="taxonomic scope" value="Bacteria"/>
</dbReference>
<dbReference type="HOGENOM" id="CLU_025427_0_2_5"/>
<dbReference type="PhylomeDB" id="P62419"/>
<dbReference type="UniPathway" id="UPA00109">
    <property type="reaction ID" value="UER00185"/>
</dbReference>
<dbReference type="GO" id="GO:0005829">
    <property type="term" value="C:cytosol"/>
    <property type="evidence" value="ECO:0007669"/>
    <property type="project" value="TreeGrafter"/>
</dbReference>
<dbReference type="GO" id="GO:0043531">
    <property type="term" value="F:ADP binding"/>
    <property type="evidence" value="ECO:0007669"/>
    <property type="project" value="TreeGrafter"/>
</dbReference>
<dbReference type="GO" id="GO:0005524">
    <property type="term" value="F:ATP binding"/>
    <property type="evidence" value="ECO:0007669"/>
    <property type="project" value="UniProtKB-KW"/>
</dbReference>
<dbReference type="GO" id="GO:0004618">
    <property type="term" value="F:phosphoglycerate kinase activity"/>
    <property type="evidence" value="ECO:0007669"/>
    <property type="project" value="UniProtKB-UniRule"/>
</dbReference>
<dbReference type="GO" id="GO:0006094">
    <property type="term" value="P:gluconeogenesis"/>
    <property type="evidence" value="ECO:0007669"/>
    <property type="project" value="TreeGrafter"/>
</dbReference>
<dbReference type="GO" id="GO:0006096">
    <property type="term" value="P:glycolytic process"/>
    <property type="evidence" value="ECO:0007669"/>
    <property type="project" value="UniProtKB-UniRule"/>
</dbReference>
<dbReference type="FunFam" id="3.40.50.1260:FF:000006">
    <property type="entry name" value="Phosphoglycerate kinase"/>
    <property type="match status" value="1"/>
</dbReference>
<dbReference type="FunFam" id="3.40.50.1260:FF:000031">
    <property type="entry name" value="Phosphoglycerate kinase 1"/>
    <property type="match status" value="1"/>
</dbReference>
<dbReference type="Gene3D" id="3.40.50.1260">
    <property type="entry name" value="Phosphoglycerate kinase, N-terminal domain"/>
    <property type="match status" value="2"/>
</dbReference>
<dbReference type="HAMAP" id="MF_00145">
    <property type="entry name" value="Phosphoglyc_kinase"/>
    <property type="match status" value="1"/>
</dbReference>
<dbReference type="InterPro" id="IPR001576">
    <property type="entry name" value="Phosphoglycerate_kinase"/>
</dbReference>
<dbReference type="InterPro" id="IPR015911">
    <property type="entry name" value="Phosphoglycerate_kinase_CS"/>
</dbReference>
<dbReference type="InterPro" id="IPR015824">
    <property type="entry name" value="Phosphoglycerate_kinase_N"/>
</dbReference>
<dbReference type="InterPro" id="IPR036043">
    <property type="entry name" value="Phosphoglycerate_kinase_sf"/>
</dbReference>
<dbReference type="PANTHER" id="PTHR11406">
    <property type="entry name" value="PHOSPHOGLYCERATE KINASE"/>
    <property type="match status" value="1"/>
</dbReference>
<dbReference type="PANTHER" id="PTHR11406:SF23">
    <property type="entry name" value="PHOSPHOGLYCERATE KINASE 1, CHLOROPLASTIC-RELATED"/>
    <property type="match status" value="1"/>
</dbReference>
<dbReference type="Pfam" id="PF00162">
    <property type="entry name" value="PGK"/>
    <property type="match status" value="1"/>
</dbReference>
<dbReference type="PIRSF" id="PIRSF000724">
    <property type="entry name" value="Pgk"/>
    <property type="match status" value="1"/>
</dbReference>
<dbReference type="PRINTS" id="PR00477">
    <property type="entry name" value="PHGLYCKINASE"/>
</dbReference>
<dbReference type="SUPFAM" id="SSF53748">
    <property type="entry name" value="Phosphoglycerate kinase"/>
    <property type="match status" value="1"/>
</dbReference>
<dbReference type="PROSITE" id="PS00111">
    <property type="entry name" value="PGLYCERATE_KINASE"/>
    <property type="match status" value="1"/>
</dbReference>
<gene>
    <name evidence="1" type="primary">pgk</name>
    <name type="synonym">cbbK</name>
    <name type="ordered locus">RPA0943</name>
</gene>
<comment type="catalytic activity">
    <reaction evidence="1">
        <text>(2R)-3-phosphoglycerate + ATP = (2R)-3-phospho-glyceroyl phosphate + ADP</text>
        <dbReference type="Rhea" id="RHEA:14801"/>
        <dbReference type="ChEBI" id="CHEBI:30616"/>
        <dbReference type="ChEBI" id="CHEBI:57604"/>
        <dbReference type="ChEBI" id="CHEBI:58272"/>
        <dbReference type="ChEBI" id="CHEBI:456216"/>
        <dbReference type="EC" id="2.7.2.3"/>
    </reaction>
</comment>
<comment type="pathway">
    <text evidence="1">Carbohydrate degradation; glycolysis; pyruvate from D-glyceraldehyde 3-phosphate: step 2/5.</text>
</comment>
<comment type="subunit">
    <text evidence="1">Monomer.</text>
</comment>
<comment type="subcellular location">
    <subcellularLocation>
        <location evidence="1">Cytoplasm</location>
    </subcellularLocation>
</comment>
<comment type="similarity">
    <text evidence="1">Belongs to the phosphoglycerate kinase family.</text>
</comment>
<protein>
    <recommendedName>
        <fullName evidence="1">Phosphoglycerate kinase</fullName>
        <ecNumber evidence="1">2.7.2.3</ecNumber>
    </recommendedName>
</protein>
<proteinExistence type="inferred from homology"/>
<name>PGK_RHOPA</name>
<sequence length="398" mass="41884">MTKTFRTLDDVDVKGKRVLLRVDLNVPMDAGKVTDTTRLERVMPTITELSGKGAKVILLAHFGRPKGRDDKNSLKPVAAALADVIKKPVGFADDCIGEPAAKAIAAMADGDILCLENTRFHPEEEKNDPAFVAKLAELGDIWVNDAFSAAHRAHATTEGLGHKLPAYAGRTMQAELVALNKALEAPVKPVIAIVGGAKVSTKIDLLENLVTKVQALVIGGGMANTFLHAQGVKVGKSLCEKDLAPTALRILDKAEAANCAIILPVDATVAYHFEANAPSFAYGLDAIPDDAMILDVGPRSIERIHAAIDDAATLVWNGPVGAFELTPFDKGTVEAAKHAAKRTKAGKLVSVAGGGDTVAALNHAGVADDFTYISTAGGAFLEWMEGKPLPGVEVLQVK</sequence>
<evidence type="ECO:0000255" key="1">
    <source>
        <dbReference type="HAMAP-Rule" id="MF_00145"/>
    </source>
</evidence>
<organism>
    <name type="scientific">Rhodopseudomonas palustris (strain ATCC BAA-98 / CGA009)</name>
    <dbReference type="NCBI Taxonomy" id="258594"/>
    <lineage>
        <taxon>Bacteria</taxon>
        <taxon>Pseudomonadati</taxon>
        <taxon>Pseudomonadota</taxon>
        <taxon>Alphaproteobacteria</taxon>
        <taxon>Hyphomicrobiales</taxon>
        <taxon>Nitrobacteraceae</taxon>
        <taxon>Rhodopseudomonas</taxon>
    </lineage>
</organism>
<keyword id="KW-0067">ATP-binding</keyword>
<keyword id="KW-0963">Cytoplasm</keyword>
<keyword id="KW-0324">Glycolysis</keyword>
<keyword id="KW-0418">Kinase</keyword>
<keyword id="KW-0547">Nucleotide-binding</keyword>
<keyword id="KW-0808">Transferase</keyword>